<protein>
    <recommendedName>
        <fullName evidence="1">NADPH-dependent 7-cyano-7-deazaguanine reductase</fullName>
        <ecNumber evidence="1">1.7.1.13</ecNumber>
    </recommendedName>
    <alternativeName>
        <fullName evidence="1">7-cyano-7-carbaguanine reductase</fullName>
    </alternativeName>
    <alternativeName>
        <fullName evidence="1">NADPH-dependent nitrile oxidoreductase</fullName>
    </alternativeName>
    <alternativeName>
        <fullName evidence="1">PreQ(0) reductase</fullName>
    </alternativeName>
</protein>
<evidence type="ECO:0000255" key="1">
    <source>
        <dbReference type="HAMAP-Rule" id="MF_00817"/>
    </source>
</evidence>
<feature type="chain" id="PRO_1000193205" description="NADPH-dependent 7-cyano-7-deazaguanine reductase">
    <location>
        <begin position="1"/>
        <end position="270"/>
    </location>
</feature>
<feature type="active site" description="Thioimide intermediate" evidence="1">
    <location>
        <position position="177"/>
    </location>
</feature>
<feature type="active site" description="Proton donor" evidence="1">
    <location>
        <position position="184"/>
    </location>
</feature>
<feature type="binding site" evidence="1">
    <location>
        <begin position="79"/>
        <end position="81"/>
    </location>
    <ligand>
        <name>substrate</name>
    </ligand>
</feature>
<feature type="binding site" evidence="1">
    <location>
        <begin position="81"/>
        <end position="82"/>
    </location>
    <ligand>
        <name>NADPH</name>
        <dbReference type="ChEBI" id="CHEBI:57783"/>
    </ligand>
</feature>
<feature type="binding site" evidence="1">
    <location>
        <begin position="216"/>
        <end position="217"/>
    </location>
    <ligand>
        <name>substrate</name>
    </ligand>
</feature>
<feature type="binding site" evidence="1">
    <location>
        <begin position="245"/>
        <end position="246"/>
    </location>
    <ligand>
        <name>NADPH</name>
        <dbReference type="ChEBI" id="CHEBI:57783"/>
    </ligand>
</feature>
<dbReference type="EC" id="1.7.1.13" evidence="1"/>
<dbReference type="EMBL" id="CP000863">
    <property type="protein sequence ID" value="ACC57826.1"/>
    <property type="molecule type" value="Genomic_DNA"/>
</dbReference>
<dbReference type="RefSeq" id="WP_000110166.1">
    <property type="nucleotide sequence ID" value="NZ_CP031380.1"/>
</dbReference>
<dbReference type="SMR" id="B2HUZ6"/>
<dbReference type="KEGG" id="abc:ACICU_02514"/>
<dbReference type="HOGENOM" id="CLU_054738_0_0_6"/>
<dbReference type="UniPathway" id="UPA00392"/>
<dbReference type="Proteomes" id="UP000008839">
    <property type="component" value="Chromosome"/>
</dbReference>
<dbReference type="GO" id="GO:0005737">
    <property type="term" value="C:cytoplasm"/>
    <property type="evidence" value="ECO:0007669"/>
    <property type="project" value="UniProtKB-SubCell"/>
</dbReference>
<dbReference type="GO" id="GO:0033739">
    <property type="term" value="F:preQ1 synthase activity"/>
    <property type="evidence" value="ECO:0007669"/>
    <property type="project" value="UniProtKB-UniRule"/>
</dbReference>
<dbReference type="GO" id="GO:0008616">
    <property type="term" value="P:queuosine biosynthetic process"/>
    <property type="evidence" value="ECO:0007669"/>
    <property type="project" value="UniProtKB-UniRule"/>
</dbReference>
<dbReference type="GO" id="GO:0006400">
    <property type="term" value="P:tRNA modification"/>
    <property type="evidence" value="ECO:0007669"/>
    <property type="project" value="UniProtKB-UniRule"/>
</dbReference>
<dbReference type="Gene3D" id="3.30.1130.10">
    <property type="match status" value="2"/>
</dbReference>
<dbReference type="HAMAP" id="MF_00817">
    <property type="entry name" value="QueF_type2"/>
    <property type="match status" value="1"/>
</dbReference>
<dbReference type="InterPro" id="IPR043133">
    <property type="entry name" value="GTP-CH-I_C/QueF"/>
</dbReference>
<dbReference type="InterPro" id="IPR050084">
    <property type="entry name" value="NADPH_dep_7-cyano-7-deazaG_red"/>
</dbReference>
<dbReference type="InterPro" id="IPR029500">
    <property type="entry name" value="QueF"/>
</dbReference>
<dbReference type="InterPro" id="IPR029139">
    <property type="entry name" value="QueF_N"/>
</dbReference>
<dbReference type="InterPro" id="IPR016428">
    <property type="entry name" value="QueF_type2"/>
</dbReference>
<dbReference type="NCBIfam" id="TIGR03138">
    <property type="entry name" value="QueF"/>
    <property type="match status" value="1"/>
</dbReference>
<dbReference type="PANTHER" id="PTHR34354">
    <property type="entry name" value="NADPH-DEPENDENT 7-CYANO-7-DEAZAGUANINE REDUCTASE"/>
    <property type="match status" value="1"/>
</dbReference>
<dbReference type="PANTHER" id="PTHR34354:SF1">
    <property type="entry name" value="NADPH-DEPENDENT 7-CYANO-7-DEAZAGUANINE REDUCTASE"/>
    <property type="match status" value="1"/>
</dbReference>
<dbReference type="Pfam" id="PF14489">
    <property type="entry name" value="QueF"/>
    <property type="match status" value="1"/>
</dbReference>
<dbReference type="Pfam" id="PF14819">
    <property type="entry name" value="QueF_N"/>
    <property type="match status" value="1"/>
</dbReference>
<dbReference type="PIRSF" id="PIRSF004750">
    <property type="entry name" value="Nitrile_oxidored_YqcD_prd"/>
    <property type="match status" value="1"/>
</dbReference>
<dbReference type="SUPFAM" id="SSF55620">
    <property type="entry name" value="Tetrahydrobiopterin biosynthesis enzymes-like"/>
    <property type="match status" value="1"/>
</dbReference>
<reference key="1">
    <citation type="journal article" date="2008" name="Antimicrob. Agents Chemother.">
        <title>Whole-genome pyrosequencing of an epidemic multidrug-resistant Acinetobacter baumannii strain belonging to the European clone II group.</title>
        <authorList>
            <person name="Iacono M."/>
            <person name="Villa L."/>
            <person name="Fortini D."/>
            <person name="Bordoni R."/>
            <person name="Imperi F."/>
            <person name="Bonnal R.J."/>
            <person name="Sicheritz-Ponten T."/>
            <person name="De Bellis G."/>
            <person name="Visca P."/>
            <person name="Cassone A."/>
            <person name="Carattoli A."/>
        </authorList>
    </citation>
    <scope>NUCLEOTIDE SEQUENCE [LARGE SCALE GENOMIC DNA]</scope>
    <source>
        <strain>ACICU</strain>
    </source>
</reference>
<proteinExistence type="inferred from homology"/>
<organism>
    <name type="scientific">Acinetobacter baumannii (strain ACICU)</name>
    <dbReference type="NCBI Taxonomy" id="405416"/>
    <lineage>
        <taxon>Bacteria</taxon>
        <taxon>Pseudomonadati</taxon>
        <taxon>Pseudomonadota</taxon>
        <taxon>Gammaproteobacteria</taxon>
        <taxon>Moraxellales</taxon>
        <taxon>Moraxellaceae</taxon>
        <taxon>Acinetobacter</taxon>
        <taxon>Acinetobacter calcoaceticus/baumannii complex</taxon>
    </lineage>
</organism>
<accession>B2HUZ6</accession>
<gene>
    <name evidence="1" type="primary">queF</name>
    <name type="ordered locus">ACICU_02514</name>
</gene>
<sequence length="270" mass="30920">MSVEQSLLGKETQYPTSYQPDVLFPIARAQSREKYAHIEGITQGKDWWHVFEISWLNAHGIPQVAIGRITLPASSPNLIESKSLKLYFNSLNFTQFDSTQSFIETVEKDLSAAAGAKVELTLFQVDDLEISKPQGICIDDLMPERLEQHPDATLLKLDESGEEIEVELYSHLLRSNCPVTGQPDWGTVFIRFKGKKPCYRSLLAYIISYRQHNGFHEQCVEQIFADIWQNLQPEKLMVYATYTRRGGLDINPCRVSDLTWMPKPIRLARQ</sequence>
<keyword id="KW-0963">Cytoplasm</keyword>
<keyword id="KW-0521">NADP</keyword>
<keyword id="KW-0560">Oxidoreductase</keyword>
<keyword id="KW-0671">Queuosine biosynthesis</keyword>
<comment type="function">
    <text evidence="1">Catalyzes the NADPH-dependent reduction of 7-cyano-7-deazaguanine (preQ0) to 7-aminomethyl-7-deazaguanine (preQ1).</text>
</comment>
<comment type="catalytic activity">
    <reaction evidence="1">
        <text>7-aminomethyl-7-carbaguanine + 2 NADP(+) = 7-cyano-7-deazaguanine + 2 NADPH + 3 H(+)</text>
        <dbReference type="Rhea" id="RHEA:13409"/>
        <dbReference type="ChEBI" id="CHEBI:15378"/>
        <dbReference type="ChEBI" id="CHEBI:45075"/>
        <dbReference type="ChEBI" id="CHEBI:57783"/>
        <dbReference type="ChEBI" id="CHEBI:58349"/>
        <dbReference type="ChEBI" id="CHEBI:58703"/>
        <dbReference type="EC" id="1.7.1.13"/>
    </reaction>
</comment>
<comment type="pathway">
    <text evidence="1">tRNA modification; tRNA-queuosine biosynthesis.</text>
</comment>
<comment type="subunit">
    <text evidence="1">Homodimer.</text>
</comment>
<comment type="subcellular location">
    <subcellularLocation>
        <location evidence="1">Cytoplasm</location>
    </subcellularLocation>
</comment>
<comment type="similarity">
    <text evidence="1">Belongs to the GTP cyclohydrolase I family. QueF type 2 subfamily.</text>
</comment>
<name>QUEF_ACIBC</name>